<proteinExistence type="evidence at transcript level"/>
<organism>
    <name type="scientific">Sus scrofa</name>
    <name type="common">Pig</name>
    <dbReference type="NCBI Taxonomy" id="9823"/>
    <lineage>
        <taxon>Eukaryota</taxon>
        <taxon>Metazoa</taxon>
        <taxon>Chordata</taxon>
        <taxon>Craniata</taxon>
        <taxon>Vertebrata</taxon>
        <taxon>Euteleostomi</taxon>
        <taxon>Mammalia</taxon>
        <taxon>Eutheria</taxon>
        <taxon>Laurasiatheria</taxon>
        <taxon>Artiodactyla</taxon>
        <taxon>Suina</taxon>
        <taxon>Suidae</taxon>
        <taxon>Sus</taxon>
    </lineage>
</organism>
<comment type="function">
    <text evidence="3">Receptor for the chemoattractant adipokine chemerin/RARRES2 and for the omega-3 fatty acid derived molecule resolvin E1. Interaction with RARRES2 initiates activation of G proteins G(i)/G(o) and beta-arrestin pathways inducing cellular responses via second messenger pathways such as intracellular calcium mobilization, phosphorylation of MAP kinases MAPK1/MAPK3 (ERK1/2), TYRO3, MAPK14/P38MAPK and PI3K leading to multifunctional effects, like, reduction of immune responses, enhancing of adipogenesis and angionesis. Resolvin E1 down-regulates cytokine production in macrophages by reducing the activation of MAPK1/3 (ERK1/2) and NF-kappa-B. Positively regulates adipogenesis and adipocyte metabolism (By similarity).</text>
</comment>
<comment type="subcellular location">
    <subcellularLocation>
        <location evidence="3">Cell membrane</location>
        <topology evidence="4">Multi-pass membrane protein</topology>
    </subcellularLocation>
</comment>
<comment type="tissue specificity">
    <text evidence="7">Predominantly expressed in spleen and temperately in adipose tissue.</text>
</comment>
<comment type="similarity">
    <text evidence="8">Belongs to the chemokine-like receptor (CMKLR) family.</text>
</comment>
<gene>
    <name type="primary">CMLKR1</name>
</gene>
<accession>B1PHQ8</accession>
<protein>
    <recommendedName>
        <fullName evidence="8">Chemerin-like receptor 1</fullName>
    </recommendedName>
    <alternativeName>
        <fullName>Chemokine-like receptor 1</fullName>
    </alternativeName>
</protein>
<dbReference type="EMBL" id="EU660866">
    <property type="protein sequence ID" value="ACD31687.1"/>
    <property type="molecule type" value="Genomic_DNA"/>
</dbReference>
<dbReference type="EMBL" id="EU421950">
    <property type="protein sequence ID" value="ACA42765.1"/>
    <property type="molecule type" value="mRNA"/>
</dbReference>
<dbReference type="RefSeq" id="NP_001116572.1">
    <property type="nucleotide sequence ID" value="NM_001123100.1"/>
</dbReference>
<dbReference type="SMR" id="B1PHQ8"/>
<dbReference type="FunCoup" id="B1PHQ8">
    <property type="interactions" value="336"/>
</dbReference>
<dbReference type="STRING" id="9823.ENSSSCP00000059035"/>
<dbReference type="GlyCosmos" id="B1PHQ8">
    <property type="glycosylation" value="2 sites, No reported glycans"/>
</dbReference>
<dbReference type="GlyGen" id="B1PHQ8">
    <property type="glycosylation" value="2 sites"/>
</dbReference>
<dbReference type="PaxDb" id="9823-ENSSSCP00000010614"/>
<dbReference type="Ensembl" id="ENSSSCT00000044992.3">
    <property type="protein sequence ID" value="ENSSSCP00000049260.1"/>
    <property type="gene ID" value="ENSSSCG00000031346.3"/>
</dbReference>
<dbReference type="Ensembl" id="ENSSSCT00000055789.3">
    <property type="protein sequence ID" value="ENSSSCP00000055388.1"/>
    <property type="gene ID" value="ENSSSCG00000031346.3"/>
</dbReference>
<dbReference type="Ensembl" id="ENSSSCT00000058690.3">
    <property type="protein sequence ID" value="ENSSSCP00000059035.1"/>
    <property type="gene ID" value="ENSSSCG00000031346.3"/>
</dbReference>
<dbReference type="Ensembl" id="ENSSSCT00025037188.1">
    <property type="protein sequence ID" value="ENSSSCP00025015575.1"/>
    <property type="gene ID" value="ENSSSCG00025027435.1"/>
</dbReference>
<dbReference type="Ensembl" id="ENSSSCT00025037226.1">
    <property type="protein sequence ID" value="ENSSSCP00025015586.1"/>
    <property type="gene ID" value="ENSSSCG00025027435.1"/>
</dbReference>
<dbReference type="Ensembl" id="ENSSSCT00025037277.1">
    <property type="protein sequence ID" value="ENSSSCP00025015617.1"/>
    <property type="gene ID" value="ENSSSCG00025027435.1"/>
</dbReference>
<dbReference type="Ensembl" id="ENSSSCT00025037314.1">
    <property type="protein sequence ID" value="ENSSSCP00025015635.1"/>
    <property type="gene ID" value="ENSSSCG00025027435.1"/>
</dbReference>
<dbReference type="Ensembl" id="ENSSSCT00035100825.1">
    <property type="protein sequence ID" value="ENSSSCP00035042854.1"/>
    <property type="gene ID" value="ENSSSCG00035074277.1"/>
</dbReference>
<dbReference type="Ensembl" id="ENSSSCT00035100840.1">
    <property type="protein sequence ID" value="ENSSSCP00035042862.1"/>
    <property type="gene ID" value="ENSSSCG00035074277.1"/>
</dbReference>
<dbReference type="Ensembl" id="ENSSSCT00035100853.1">
    <property type="protein sequence ID" value="ENSSSCP00035042870.1"/>
    <property type="gene ID" value="ENSSSCG00035074277.1"/>
</dbReference>
<dbReference type="Ensembl" id="ENSSSCT00035100869.1">
    <property type="protein sequence ID" value="ENSSSCP00035042879.1"/>
    <property type="gene ID" value="ENSSSCG00035074277.1"/>
</dbReference>
<dbReference type="Ensembl" id="ENSSSCT00040006019.1">
    <property type="protein sequence ID" value="ENSSSCP00040002353.1"/>
    <property type="gene ID" value="ENSSSCG00040004518.1"/>
</dbReference>
<dbReference type="Ensembl" id="ENSSSCT00040006021.1">
    <property type="protein sequence ID" value="ENSSSCP00040002354.1"/>
    <property type="gene ID" value="ENSSSCG00040004518.1"/>
</dbReference>
<dbReference type="Ensembl" id="ENSSSCT00040006022.1">
    <property type="protein sequence ID" value="ENSSSCP00040002355.1"/>
    <property type="gene ID" value="ENSSSCG00040004518.1"/>
</dbReference>
<dbReference type="Ensembl" id="ENSSSCT00040006025.1">
    <property type="protein sequence ID" value="ENSSSCP00040002358.1"/>
    <property type="gene ID" value="ENSSSCG00040004518.1"/>
</dbReference>
<dbReference type="Ensembl" id="ENSSSCT00045034722.1">
    <property type="protein sequence ID" value="ENSSSCP00045024083.1"/>
    <property type="gene ID" value="ENSSSCG00045020371.1"/>
</dbReference>
<dbReference type="Ensembl" id="ENSSSCT00045034778.1">
    <property type="protein sequence ID" value="ENSSSCP00045024121.1"/>
    <property type="gene ID" value="ENSSSCG00045020371.1"/>
</dbReference>
<dbReference type="Ensembl" id="ENSSSCT00045034808.1">
    <property type="protein sequence ID" value="ENSSSCP00045024143.1"/>
    <property type="gene ID" value="ENSSSCG00045020371.1"/>
</dbReference>
<dbReference type="Ensembl" id="ENSSSCT00045034843.1">
    <property type="protein sequence ID" value="ENSSSCP00045024168.1"/>
    <property type="gene ID" value="ENSSSCG00045020371.1"/>
</dbReference>
<dbReference type="Ensembl" id="ENSSSCT00050051205.1">
    <property type="protein sequence ID" value="ENSSSCP00050021481.1"/>
    <property type="gene ID" value="ENSSSCG00050037975.1"/>
</dbReference>
<dbReference type="Ensembl" id="ENSSSCT00050051210.1">
    <property type="protein sequence ID" value="ENSSSCP00050021482.1"/>
    <property type="gene ID" value="ENSSSCG00050037975.1"/>
</dbReference>
<dbReference type="Ensembl" id="ENSSSCT00050051213.1">
    <property type="protein sequence ID" value="ENSSSCP00050021485.1"/>
    <property type="gene ID" value="ENSSSCG00050037975.1"/>
</dbReference>
<dbReference type="Ensembl" id="ENSSSCT00050051214.1">
    <property type="protein sequence ID" value="ENSSSCP00050021486.1"/>
    <property type="gene ID" value="ENSSSCG00050037975.1"/>
</dbReference>
<dbReference type="Ensembl" id="ENSSSCT00055013166.1">
    <property type="protein sequence ID" value="ENSSSCP00055010339.1"/>
    <property type="gene ID" value="ENSSSCG00055006809.1"/>
</dbReference>
<dbReference type="Ensembl" id="ENSSSCT00055013185.1">
    <property type="protein sequence ID" value="ENSSSCP00055010355.1"/>
    <property type="gene ID" value="ENSSSCG00055006809.1"/>
</dbReference>
<dbReference type="Ensembl" id="ENSSSCT00055013206.1">
    <property type="protein sequence ID" value="ENSSSCP00055010373.1"/>
    <property type="gene ID" value="ENSSSCG00055006809.1"/>
</dbReference>
<dbReference type="Ensembl" id="ENSSSCT00055013219.1">
    <property type="protein sequence ID" value="ENSSSCP00055010386.1"/>
    <property type="gene ID" value="ENSSSCG00055006809.1"/>
</dbReference>
<dbReference type="Ensembl" id="ENSSSCT00065031725.1">
    <property type="protein sequence ID" value="ENSSSCP00065012981.1"/>
    <property type="gene ID" value="ENSSSCG00065023832.1"/>
</dbReference>
<dbReference type="Ensembl" id="ENSSSCT00065031727.1">
    <property type="protein sequence ID" value="ENSSSCP00065012983.1"/>
    <property type="gene ID" value="ENSSSCG00065023832.1"/>
</dbReference>
<dbReference type="Ensembl" id="ENSSSCT00065031730.1">
    <property type="protein sequence ID" value="ENSSSCP00065012985.1"/>
    <property type="gene ID" value="ENSSSCG00065023832.1"/>
</dbReference>
<dbReference type="Ensembl" id="ENSSSCT00065031732.1">
    <property type="protein sequence ID" value="ENSSSCP00065012986.1"/>
    <property type="gene ID" value="ENSSSCG00065023832.1"/>
</dbReference>
<dbReference type="Ensembl" id="ENSSSCT00070004682.1">
    <property type="protein sequence ID" value="ENSSSCP00070003836.1"/>
    <property type="gene ID" value="ENSSSCG00070002505.1"/>
</dbReference>
<dbReference type="Ensembl" id="ENSSSCT00070004689.1">
    <property type="protein sequence ID" value="ENSSSCP00070003842.1"/>
    <property type="gene ID" value="ENSSSCG00070002505.1"/>
</dbReference>
<dbReference type="Ensembl" id="ENSSSCT00070004693.1">
    <property type="protein sequence ID" value="ENSSSCP00070003846.1"/>
    <property type="gene ID" value="ENSSSCG00070002505.1"/>
</dbReference>
<dbReference type="Ensembl" id="ENSSSCT00085047065">
    <property type="protein sequence ID" value="ENSSSCP00085032864"/>
    <property type="gene ID" value="ENSSSCG00085024533"/>
</dbReference>
<dbReference type="Ensembl" id="ENSSSCT00085047073">
    <property type="protein sequence ID" value="ENSSSCP00085032872"/>
    <property type="gene ID" value="ENSSSCG00085024533"/>
</dbReference>
<dbReference type="Ensembl" id="ENSSSCT00085047078">
    <property type="protein sequence ID" value="ENSSSCP00085032877"/>
    <property type="gene ID" value="ENSSSCG00085024533"/>
</dbReference>
<dbReference type="Ensembl" id="ENSSSCT00085047081">
    <property type="protein sequence ID" value="ENSSSCP00085032880"/>
    <property type="gene ID" value="ENSSSCG00085024533"/>
</dbReference>
<dbReference type="Ensembl" id="ENSSSCT00085047091">
    <property type="protein sequence ID" value="ENSSSCP00085032885"/>
    <property type="gene ID" value="ENSSSCG00085024533"/>
</dbReference>
<dbReference type="Ensembl" id="ENSSSCT00085047094">
    <property type="protein sequence ID" value="ENSSSCP00085032886"/>
    <property type="gene ID" value="ENSSSCG00085024533"/>
</dbReference>
<dbReference type="Ensembl" id="ENSSSCT00085047099">
    <property type="protein sequence ID" value="ENSSSCP00085032889"/>
    <property type="gene ID" value="ENSSSCG00085024533"/>
</dbReference>
<dbReference type="Ensembl" id="ENSSSCT00085047105">
    <property type="protein sequence ID" value="ENSSSCP00085032893"/>
    <property type="gene ID" value="ENSSSCG00085024533"/>
</dbReference>
<dbReference type="Ensembl" id="ENSSSCT00085047116">
    <property type="protein sequence ID" value="ENSSSCP00085032899"/>
    <property type="gene ID" value="ENSSSCG00085024533"/>
</dbReference>
<dbReference type="Ensembl" id="ENSSSCT00090034004">
    <property type="protein sequence ID" value="ENSSSCP00090021197"/>
    <property type="gene ID" value="ENSSSCG00090019218"/>
</dbReference>
<dbReference type="Ensembl" id="ENSSSCT00090034013">
    <property type="protein sequence ID" value="ENSSSCP00090021203"/>
    <property type="gene ID" value="ENSSSCG00090019218"/>
</dbReference>
<dbReference type="Ensembl" id="ENSSSCT00090034016">
    <property type="protein sequence ID" value="ENSSSCP00090021204"/>
    <property type="gene ID" value="ENSSSCG00090019218"/>
</dbReference>
<dbReference type="Ensembl" id="ENSSSCT00090034021">
    <property type="protein sequence ID" value="ENSSSCP00090021207"/>
    <property type="gene ID" value="ENSSSCG00090019218"/>
</dbReference>
<dbReference type="Ensembl" id="ENSSSCT00090034024">
    <property type="protein sequence ID" value="ENSSSCP00090021209"/>
    <property type="gene ID" value="ENSSSCG00090019218"/>
</dbReference>
<dbReference type="Ensembl" id="ENSSSCT00090034029">
    <property type="protein sequence ID" value="ENSSSCP00090021212"/>
    <property type="gene ID" value="ENSSSCG00090019218"/>
</dbReference>
<dbReference type="Ensembl" id="ENSSSCT00090034033">
    <property type="protein sequence ID" value="ENSSSCP00090021215"/>
    <property type="gene ID" value="ENSSSCG00090019218"/>
</dbReference>
<dbReference type="Ensembl" id="ENSSSCT00090034035">
    <property type="protein sequence ID" value="ENSSSCP00090021217"/>
    <property type="gene ID" value="ENSSSCG00090019218"/>
</dbReference>
<dbReference type="Ensembl" id="ENSSSCT00090034040">
    <property type="protein sequence ID" value="ENSSSCP00090021219"/>
    <property type="gene ID" value="ENSSSCG00090019218"/>
</dbReference>
<dbReference type="Ensembl" id="ENSSSCT00090034043">
    <property type="protein sequence ID" value="ENSSSCP00090021222"/>
    <property type="gene ID" value="ENSSSCG00090019218"/>
</dbReference>
<dbReference type="Ensembl" id="ENSSSCT00105073218">
    <property type="protein sequence ID" value="ENSSSCP00105052040"/>
    <property type="gene ID" value="ENSSSCG00105038265"/>
</dbReference>
<dbReference type="Ensembl" id="ENSSSCT00105073225">
    <property type="protein sequence ID" value="ENSSSCP00105052046"/>
    <property type="gene ID" value="ENSSSCG00105038265"/>
</dbReference>
<dbReference type="Ensembl" id="ENSSSCT00105073238">
    <property type="protein sequence ID" value="ENSSSCP00105052055"/>
    <property type="gene ID" value="ENSSSCG00105038265"/>
</dbReference>
<dbReference type="Ensembl" id="ENSSSCT00105073245">
    <property type="protein sequence ID" value="ENSSSCP00105052060"/>
    <property type="gene ID" value="ENSSSCG00105038265"/>
</dbReference>
<dbReference type="Ensembl" id="ENSSSCT00105073254">
    <property type="protein sequence ID" value="ENSSSCP00105052067"/>
    <property type="gene ID" value="ENSSSCG00105038265"/>
</dbReference>
<dbReference type="Ensembl" id="ENSSSCT00105073263">
    <property type="protein sequence ID" value="ENSSSCP00105052074"/>
    <property type="gene ID" value="ENSSSCG00105038265"/>
</dbReference>
<dbReference type="Ensembl" id="ENSSSCT00105073268">
    <property type="protein sequence ID" value="ENSSSCP00105052078"/>
    <property type="gene ID" value="ENSSSCG00105038265"/>
</dbReference>
<dbReference type="Ensembl" id="ENSSSCT00105073278">
    <property type="protein sequence ID" value="ENSSSCP00105052086"/>
    <property type="gene ID" value="ENSSSCG00105038265"/>
</dbReference>
<dbReference type="Ensembl" id="ENSSSCT00105073287">
    <property type="protein sequence ID" value="ENSSSCP00105052092"/>
    <property type="gene ID" value="ENSSSCG00105038265"/>
</dbReference>
<dbReference type="Ensembl" id="ENSSSCT00110077320">
    <property type="protein sequence ID" value="ENSSSCP00110054706"/>
    <property type="gene ID" value="ENSSSCG00110040428"/>
</dbReference>
<dbReference type="Ensembl" id="ENSSSCT00110077321">
    <property type="protein sequence ID" value="ENSSSCP00110054707"/>
    <property type="gene ID" value="ENSSSCG00110040428"/>
</dbReference>
<dbReference type="Ensembl" id="ENSSSCT00110077322">
    <property type="protein sequence ID" value="ENSSSCP00110054708"/>
    <property type="gene ID" value="ENSSSCG00110040428"/>
</dbReference>
<dbReference type="Ensembl" id="ENSSSCT00110077323">
    <property type="protein sequence ID" value="ENSSSCP00110054709"/>
    <property type="gene ID" value="ENSSSCG00110040428"/>
</dbReference>
<dbReference type="Ensembl" id="ENSSSCT00110077324">
    <property type="protein sequence ID" value="ENSSSCP00110054710"/>
    <property type="gene ID" value="ENSSSCG00110040428"/>
</dbReference>
<dbReference type="Ensembl" id="ENSSSCT00110077325">
    <property type="protein sequence ID" value="ENSSSCP00110054711"/>
    <property type="gene ID" value="ENSSSCG00110040428"/>
</dbReference>
<dbReference type="Ensembl" id="ENSSSCT00110077326">
    <property type="protein sequence ID" value="ENSSSCP00110054712"/>
    <property type="gene ID" value="ENSSSCG00110040428"/>
</dbReference>
<dbReference type="Ensembl" id="ENSSSCT00110077327">
    <property type="protein sequence ID" value="ENSSSCP00110054713"/>
    <property type="gene ID" value="ENSSSCG00110040428"/>
</dbReference>
<dbReference type="Ensembl" id="ENSSSCT00110077329">
    <property type="protein sequence ID" value="ENSSSCP00110054715"/>
    <property type="gene ID" value="ENSSSCG00110040428"/>
</dbReference>
<dbReference type="Ensembl" id="ENSSSCT00115009449">
    <property type="protein sequence ID" value="ENSSSCP00115008877"/>
    <property type="gene ID" value="ENSSSCG00115005487"/>
</dbReference>
<dbReference type="Ensembl" id="ENSSSCT00130065879">
    <property type="protein sequence ID" value="ENSSSCP00130047238"/>
    <property type="gene ID" value="ENSSSCG00130033696"/>
</dbReference>
<dbReference type="Ensembl" id="ENSSSCT00130065975">
    <property type="protein sequence ID" value="ENSSSCP00130047298"/>
    <property type="gene ID" value="ENSSSCG00130033696"/>
</dbReference>
<dbReference type="Ensembl" id="ENSSSCT00130066008">
    <property type="protein sequence ID" value="ENSSSCP00130047320"/>
    <property type="gene ID" value="ENSSSCG00130033696"/>
</dbReference>
<dbReference type="Ensembl" id="ENSSSCT00130066077">
    <property type="protein sequence ID" value="ENSSSCP00130047373"/>
    <property type="gene ID" value="ENSSSCG00130033696"/>
</dbReference>
<dbReference type="Ensembl" id="ENSSSCT00130066090">
    <property type="protein sequence ID" value="ENSSSCP00130047385"/>
    <property type="gene ID" value="ENSSSCG00130033696"/>
</dbReference>
<dbReference type="Ensembl" id="ENSSSCT00130066101">
    <property type="protein sequence ID" value="ENSSSCP00130047394"/>
    <property type="gene ID" value="ENSSSCG00130033696"/>
</dbReference>
<dbReference type="Ensembl" id="ENSSSCT00130066106">
    <property type="protein sequence ID" value="ENSSSCP00130047398"/>
    <property type="gene ID" value="ENSSSCG00130033696"/>
</dbReference>
<dbReference type="Ensembl" id="ENSSSCT00130066109">
    <property type="protein sequence ID" value="ENSSSCP00130047400"/>
    <property type="gene ID" value="ENSSSCG00130033696"/>
</dbReference>
<dbReference type="Ensembl" id="ENSSSCT00130066121">
    <property type="protein sequence ID" value="ENSSSCP00130047410"/>
    <property type="gene ID" value="ENSSSCG00130033696"/>
</dbReference>
<dbReference type="GeneID" id="780421"/>
<dbReference type="KEGG" id="ssc:780421"/>
<dbReference type="CTD" id="1240"/>
<dbReference type="VGNC" id="VGNC:86800">
    <property type="gene designation" value="CMKLR1"/>
</dbReference>
<dbReference type="eggNOG" id="KOG3656">
    <property type="taxonomic scope" value="Eukaryota"/>
</dbReference>
<dbReference type="GeneTree" id="ENSGT01020000230438"/>
<dbReference type="HOGENOM" id="CLU_009579_8_0_1"/>
<dbReference type="InParanoid" id="B1PHQ8"/>
<dbReference type="OMA" id="IIMSCPS"/>
<dbReference type="OrthoDB" id="6088892at2759"/>
<dbReference type="TreeFam" id="TF330976"/>
<dbReference type="Reactome" id="R-SSC-373076">
    <property type="pathway name" value="Class A/1 (Rhodopsin-like receptors)"/>
</dbReference>
<dbReference type="Proteomes" id="UP000008227">
    <property type="component" value="Chromosome 14"/>
</dbReference>
<dbReference type="Proteomes" id="UP000314985">
    <property type="component" value="Chromosome 14"/>
</dbReference>
<dbReference type="Proteomes" id="UP000694570">
    <property type="component" value="Unplaced"/>
</dbReference>
<dbReference type="Proteomes" id="UP000694571">
    <property type="component" value="Unplaced"/>
</dbReference>
<dbReference type="Proteomes" id="UP000694720">
    <property type="component" value="Unplaced"/>
</dbReference>
<dbReference type="Proteomes" id="UP000694722">
    <property type="component" value="Unplaced"/>
</dbReference>
<dbReference type="Proteomes" id="UP000694723">
    <property type="component" value="Unplaced"/>
</dbReference>
<dbReference type="Proteomes" id="UP000694724">
    <property type="component" value="Unplaced"/>
</dbReference>
<dbReference type="Proteomes" id="UP000694725">
    <property type="component" value="Unplaced"/>
</dbReference>
<dbReference type="Proteomes" id="UP000694726">
    <property type="component" value="Unplaced"/>
</dbReference>
<dbReference type="Proteomes" id="UP000694727">
    <property type="component" value="Unplaced"/>
</dbReference>
<dbReference type="Proteomes" id="UP000694728">
    <property type="component" value="Unplaced"/>
</dbReference>
<dbReference type="Bgee" id="ENSSSCG00000031346">
    <property type="expression patterns" value="Expressed in lung and 36 other cell types or tissues"/>
</dbReference>
<dbReference type="GO" id="GO:0005886">
    <property type="term" value="C:plasma membrane"/>
    <property type="evidence" value="ECO:0000250"/>
    <property type="project" value="UniProtKB"/>
</dbReference>
<dbReference type="GO" id="GO:0097004">
    <property type="term" value="F:adipokinetic hormone binding"/>
    <property type="evidence" value="ECO:0000250"/>
    <property type="project" value="UniProtKB"/>
</dbReference>
<dbReference type="GO" id="GO:0097003">
    <property type="term" value="F:adipokinetic hormone receptor activity"/>
    <property type="evidence" value="ECO:0000250"/>
    <property type="project" value="UniProtKB"/>
</dbReference>
<dbReference type="GO" id="GO:0004875">
    <property type="term" value="F:complement receptor activity"/>
    <property type="evidence" value="ECO:0000318"/>
    <property type="project" value="GO_Central"/>
</dbReference>
<dbReference type="GO" id="GO:0004930">
    <property type="term" value="F:G protein-coupled receptor activity"/>
    <property type="evidence" value="ECO:0000318"/>
    <property type="project" value="GO_Central"/>
</dbReference>
<dbReference type="GO" id="GO:0006935">
    <property type="term" value="P:chemotaxis"/>
    <property type="evidence" value="ECO:0000250"/>
    <property type="project" value="UniProtKB"/>
</dbReference>
<dbReference type="GO" id="GO:0002430">
    <property type="term" value="P:complement receptor mediated signaling pathway"/>
    <property type="evidence" value="ECO:0000318"/>
    <property type="project" value="GO_Central"/>
</dbReference>
<dbReference type="GO" id="GO:0007186">
    <property type="term" value="P:G protein-coupled receptor signaling pathway"/>
    <property type="evidence" value="ECO:0000250"/>
    <property type="project" value="UniProtKB"/>
</dbReference>
<dbReference type="GO" id="GO:0006954">
    <property type="term" value="P:inflammatory response"/>
    <property type="evidence" value="ECO:0000318"/>
    <property type="project" value="GO_Central"/>
</dbReference>
<dbReference type="GO" id="GO:0032695">
    <property type="term" value="P:negative regulation of interleukin-12 production"/>
    <property type="evidence" value="ECO:0000250"/>
    <property type="project" value="UniProtKB"/>
</dbReference>
<dbReference type="GO" id="GO:0032088">
    <property type="term" value="P:negative regulation of NF-kappaB transcription factor activity"/>
    <property type="evidence" value="ECO:0000250"/>
    <property type="project" value="UniProtKB"/>
</dbReference>
<dbReference type="GO" id="GO:0007200">
    <property type="term" value="P:phospholipase C-activating G protein-coupled receptor signaling pathway"/>
    <property type="evidence" value="ECO:0000318"/>
    <property type="project" value="GO_Central"/>
</dbReference>
<dbReference type="GO" id="GO:0120162">
    <property type="term" value="P:positive regulation of cold-induced thermogenesis"/>
    <property type="evidence" value="ECO:0007669"/>
    <property type="project" value="Ensembl"/>
</dbReference>
<dbReference type="GO" id="GO:0007204">
    <property type="term" value="P:positive regulation of cytosolic calcium ion concentration"/>
    <property type="evidence" value="ECO:0000318"/>
    <property type="project" value="GO_Central"/>
</dbReference>
<dbReference type="GO" id="GO:0045600">
    <property type="term" value="P:positive regulation of fat cell differentiation"/>
    <property type="evidence" value="ECO:0000250"/>
    <property type="project" value="UniProtKB"/>
</dbReference>
<dbReference type="GO" id="GO:0010759">
    <property type="term" value="P:positive regulation of macrophage chemotaxis"/>
    <property type="evidence" value="ECO:0000318"/>
    <property type="project" value="GO_Central"/>
</dbReference>
<dbReference type="GO" id="GO:0050848">
    <property type="term" value="P:regulation of calcium-mediated signaling"/>
    <property type="evidence" value="ECO:0000250"/>
    <property type="project" value="UniProtKB"/>
</dbReference>
<dbReference type="CDD" id="cd15116">
    <property type="entry name" value="7tmA_CMKLR1"/>
    <property type="match status" value="1"/>
</dbReference>
<dbReference type="FunFam" id="1.20.1070.10:FF:000034">
    <property type="entry name" value="G-protein coupled receptor 1"/>
    <property type="match status" value="1"/>
</dbReference>
<dbReference type="Gene3D" id="1.20.1070.10">
    <property type="entry name" value="Rhodopsin 7-helix transmembrane proteins"/>
    <property type="match status" value="1"/>
</dbReference>
<dbReference type="InterPro" id="IPR002258">
    <property type="entry name" value="CML1"/>
</dbReference>
<dbReference type="InterPro" id="IPR000826">
    <property type="entry name" value="Formyl_rcpt-rel"/>
</dbReference>
<dbReference type="InterPro" id="IPR000276">
    <property type="entry name" value="GPCR_Rhodpsn"/>
</dbReference>
<dbReference type="InterPro" id="IPR017452">
    <property type="entry name" value="GPCR_Rhodpsn_7TM"/>
</dbReference>
<dbReference type="PANTHER" id="PTHR24225:SF49">
    <property type="entry name" value="CHEMERIN-LIKE RECEPTOR 1"/>
    <property type="match status" value="1"/>
</dbReference>
<dbReference type="PANTHER" id="PTHR24225">
    <property type="entry name" value="CHEMOTACTIC RECEPTOR"/>
    <property type="match status" value="1"/>
</dbReference>
<dbReference type="Pfam" id="PF00001">
    <property type="entry name" value="7tm_1"/>
    <property type="match status" value="1"/>
</dbReference>
<dbReference type="PRINTS" id="PR01126">
    <property type="entry name" value="DEZORPHANR"/>
</dbReference>
<dbReference type="PRINTS" id="PR00237">
    <property type="entry name" value="GPCRRHODOPSN"/>
</dbReference>
<dbReference type="SUPFAM" id="SSF81321">
    <property type="entry name" value="Family A G protein-coupled receptor-like"/>
    <property type="match status" value="1"/>
</dbReference>
<dbReference type="PROSITE" id="PS00237">
    <property type="entry name" value="G_PROTEIN_RECEP_F1_1"/>
    <property type="match status" value="1"/>
</dbReference>
<dbReference type="PROSITE" id="PS50262">
    <property type="entry name" value="G_PROTEIN_RECEP_F1_2"/>
    <property type="match status" value="1"/>
</dbReference>
<sequence>MDFEDYNSTYEDSYTDDFDTIVALEEFSPLEGRVVRIFLVVVYSIICFLGILGNGLVIVIATFKMKKTVNTVWFLNLAVADFLFNVFLPIHIAYAAMDYHWVFGTAMCKISNFLLIHNMYTSVFLLTVISFDRCISVLLPVWSQNHRSIRLAYMACVVIWVLAFFLSSPSLVFRDTAHLHGKISCFNNFSLSATSSSSWPTHPQMDTVGFGRQMVVTITRFLCGFLVPVLIISACYFTIVYKLRRNRLAKTKKPFKIIVTIIITFFLCWCPYHTLYLLELHHRAMPGSVFSLGVPLATAIAIANSCMNPILYVFMGQDFKKFKVALFSRLVNALSEDTGHSSYPSHRSFTKMSSMNERETSML</sequence>
<keyword id="KW-1003">Cell membrane</keyword>
<keyword id="KW-1015">Disulfide bond</keyword>
<keyword id="KW-0297">G-protein coupled receptor</keyword>
<keyword id="KW-0325">Glycoprotein</keyword>
<keyword id="KW-0472">Membrane</keyword>
<keyword id="KW-0597">Phosphoprotein</keyword>
<keyword id="KW-0675">Receptor</keyword>
<keyword id="KW-1185">Reference proteome</keyword>
<keyword id="KW-0807">Transducer</keyword>
<keyword id="KW-0812">Transmembrane</keyword>
<keyword id="KW-1133">Transmembrane helix</keyword>
<name>CML1_PIG</name>
<feature type="chain" id="PRO_0000411103" description="Chemerin-like receptor 1">
    <location>
        <begin position="1"/>
        <end position="363"/>
    </location>
</feature>
<feature type="topological domain" description="Extracellular" evidence="4">
    <location>
        <begin position="1"/>
        <end position="39"/>
    </location>
</feature>
<feature type="transmembrane region" description="Helical; Name=1" evidence="4">
    <location>
        <begin position="40"/>
        <end position="60"/>
    </location>
</feature>
<feature type="topological domain" description="Cytoplasmic" evidence="4">
    <location>
        <begin position="61"/>
        <end position="71"/>
    </location>
</feature>
<feature type="transmembrane region" description="Helical; Name=2" evidence="4">
    <location>
        <begin position="72"/>
        <end position="92"/>
    </location>
</feature>
<feature type="topological domain" description="Extracellular" evidence="4">
    <location>
        <begin position="93"/>
        <end position="109"/>
    </location>
</feature>
<feature type="transmembrane region" description="Helical; Name=3" evidence="4">
    <location>
        <begin position="110"/>
        <end position="130"/>
    </location>
</feature>
<feature type="topological domain" description="Cytoplasmic" evidence="4">
    <location>
        <begin position="131"/>
        <end position="152"/>
    </location>
</feature>
<feature type="transmembrane region" description="Helical; Name=4" evidence="4">
    <location>
        <begin position="153"/>
        <end position="173"/>
    </location>
</feature>
<feature type="topological domain" description="Extracellular" evidence="4">
    <location>
        <begin position="174"/>
        <end position="220"/>
    </location>
</feature>
<feature type="transmembrane region" description="Helical; Name=5" evidence="4">
    <location>
        <begin position="221"/>
        <end position="241"/>
    </location>
</feature>
<feature type="topological domain" description="Cytoplasmic" evidence="4">
    <location>
        <begin position="242"/>
        <end position="256"/>
    </location>
</feature>
<feature type="transmembrane region" description="Helical; Name=6" evidence="4">
    <location>
        <begin position="257"/>
        <end position="277"/>
    </location>
</feature>
<feature type="topological domain" description="Extracellular" evidence="4">
    <location>
        <begin position="278"/>
        <end position="283"/>
    </location>
</feature>
<feature type="transmembrane region" description="Helical; Name=7" evidence="4">
    <location>
        <begin position="284"/>
        <end position="304"/>
    </location>
</feature>
<feature type="topological domain" description="Cytoplasmic" evidence="4">
    <location>
        <begin position="305"/>
        <end position="363"/>
    </location>
</feature>
<feature type="region of interest" description="Disordered" evidence="6">
    <location>
        <begin position="337"/>
        <end position="363"/>
    </location>
</feature>
<feature type="compositionally biased region" description="Polar residues" evidence="6">
    <location>
        <begin position="340"/>
        <end position="355"/>
    </location>
</feature>
<feature type="modified residue" description="Phosphoserine" evidence="2">
    <location>
        <position position="335"/>
    </location>
</feature>
<feature type="modified residue" description="Phosphothreonine" evidence="2">
    <location>
        <position position="338"/>
    </location>
</feature>
<feature type="modified residue" description="Phosphoserine" evidence="2">
    <location>
        <position position="345"/>
    </location>
</feature>
<feature type="modified residue" description="Phosphoserine" evidence="2">
    <location>
        <position position="348"/>
    </location>
</feature>
<feature type="modified residue" description="Phosphoserine" evidence="1">
    <location>
        <position position="354"/>
    </location>
</feature>
<feature type="glycosylation site" description="N-linked (GlcNAc...) asparagine" evidence="4">
    <location>
        <position position="7"/>
    </location>
</feature>
<feature type="glycosylation site" description="N-linked (GlcNAc...) asparagine" evidence="4">
    <location>
        <position position="188"/>
    </location>
</feature>
<feature type="disulfide bond" evidence="5">
    <location>
        <begin position="108"/>
        <end position="185"/>
    </location>
</feature>
<reference key="1">
    <citation type="journal article" date="2010" name="BMB Rep.">
        <title>Cloning of porcine chemerin, ChemR23 and GPR1 and their involvement in regulation of lipogenesis.</title>
        <authorList>
            <person name="Huang J."/>
            <person name="Zhang J."/>
            <person name="Lei T."/>
            <person name="Chen X."/>
            <person name="Zhang Y."/>
            <person name="Zhou L."/>
            <person name="Yu A."/>
            <person name="Chen Z."/>
            <person name="Zhou R."/>
            <person name="Yang Z."/>
        </authorList>
    </citation>
    <scope>NUCLEOTIDE SEQUENCE [GENOMIC DNA]</scope>
    <scope>TISSUE SPECIFICITY</scope>
</reference>
<reference key="2">
    <citation type="submission" date="2008-01" db="EMBL/GenBank/DDBJ databases">
        <authorList>
            <person name="Wang J."/>
            <person name="Yang G.-Y."/>
            <person name="Li H.-J."/>
            <person name="Wang W.-J."/>
            <person name="Zhang Z.-Q."/>
            <person name="Zang M."/>
            <person name="Tai Y.-L."/>
            <person name="Wang Y.-L."/>
        </authorList>
    </citation>
    <scope>NUCLEOTIDE SEQUENCE [MRNA]</scope>
</reference>
<evidence type="ECO:0000250" key="1">
    <source>
        <dbReference type="UniProtKB" id="O35786"/>
    </source>
</evidence>
<evidence type="ECO:0000250" key="2">
    <source>
        <dbReference type="UniProtKB" id="P97468"/>
    </source>
</evidence>
<evidence type="ECO:0000250" key="3">
    <source>
        <dbReference type="UniProtKB" id="Q99788"/>
    </source>
</evidence>
<evidence type="ECO:0000255" key="4"/>
<evidence type="ECO:0000255" key="5">
    <source>
        <dbReference type="PROSITE-ProRule" id="PRU00521"/>
    </source>
</evidence>
<evidence type="ECO:0000256" key="6">
    <source>
        <dbReference type="SAM" id="MobiDB-lite"/>
    </source>
</evidence>
<evidence type="ECO:0000269" key="7">
    <source>
    </source>
</evidence>
<evidence type="ECO:0000305" key="8"/>